<protein>
    <recommendedName>
        <fullName>Uncharacterized protein R107.5</fullName>
    </recommendedName>
</protein>
<reference key="1">
    <citation type="journal article" date="1994" name="Nature">
        <title>2.2 Mb of contiguous nucleotide sequence from chromosome III of C. elegans.</title>
        <authorList>
            <person name="Wilson R."/>
            <person name="Ainscough R."/>
            <person name="Anderson K."/>
            <person name="Baynes C."/>
            <person name="Berks M."/>
            <person name="Bonfield J."/>
            <person name="Burton J."/>
            <person name="Connell M."/>
            <person name="Copsey T."/>
            <person name="Cooper J."/>
            <person name="Coulson A."/>
            <person name="Craxton M."/>
            <person name="Dear S."/>
            <person name="Du Z."/>
            <person name="Durbin R."/>
            <person name="Favello A."/>
            <person name="Fraser A."/>
            <person name="Fulton L."/>
            <person name="Gardner A."/>
            <person name="Green P."/>
            <person name="Hawkins T."/>
            <person name="Hillier L."/>
            <person name="Jier M."/>
            <person name="Johnston L."/>
            <person name="Jones M."/>
            <person name="Kershaw J."/>
            <person name="Kirsten J."/>
            <person name="Laisster N."/>
            <person name="Latreille P."/>
            <person name="Lightning J."/>
            <person name="Lloyd C."/>
            <person name="Mortimore B."/>
            <person name="O'Callaghan M."/>
            <person name="Parsons J."/>
            <person name="Percy C."/>
            <person name="Rifken L."/>
            <person name="Roopra A."/>
            <person name="Saunders D."/>
            <person name="Shownkeen R."/>
            <person name="Sims M."/>
            <person name="Smaldon N."/>
            <person name="Smith A."/>
            <person name="Smith M."/>
            <person name="Sonnhammer E."/>
            <person name="Staden R."/>
            <person name="Sulston J."/>
            <person name="Thierry-Mieg J."/>
            <person name="Thomas K."/>
            <person name="Vaudin M."/>
            <person name="Vaughan K."/>
            <person name="Waterston R."/>
            <person name="Watson A."/>
            <person name="Weinstock L."/>
            <person name="Wilkinson-Sproat J."/>
            <person name="Wohldman P."/>
        </authorList>
    </citation>
    <scope>NUCLEOTIDE SEQUENCE [LARGE SCALE GENOMIC DNA]</scope>
    <source>
        <strain>Bristol N2</strain>
    </source>
</reference>
<reference key="2">
    <citation type="journal article" date="1998" name="Science">
        <title>Genome sequence of the nematode C. elegans: a platform for investigating biology.</title>
        <authorList>
            <consortium name="The C. elegans sequencing consortium"/>
        </authorList>
    </citation>
    <scope>NUCLEOTIDE SEQUENCE [LARGE SCALE GENOMIC DNA]</scope>
    <scope>ALTERNATIVE SPLICING</scope>
    <source>
        <strain>Bristol N2</strain>
    </source>
</reference>
<accession>P32743</accession>
<accession>Q9U387</accession>
<name>YNH5_CAEEL</name>
<keyword id="KW-0025">Alternative splicing</keyword>
<keyword id="KW-1185">Reference proteome</keyword>
<gene>
    <name type="ORF">R107.5</name>
</gene>
<dbReference type="EMBL" id="Z14092">
    <property type="protein sequence ID" value="CAA78470.1"/>
    <property type="molecule type" value="Genomic_DNA"/>
</dbReference>
<dbReference type="EMBL" id="Z14092">
    <property type="protein sequence ID" value="CAB54285.1"/>
    <property type="molecule type" value="Genomic_DNA"/>
</dbReference>
<dbReference type="PIR" id="D88546">
    <property type="entry name" value="D88546"/>
</dbReference>
<dbReference type="PIR" id="S30875">
    <property type="entry name" value="S30875"/>
</dbReference>
<dbReference type="RefSeq" id="NP_499003.1">
    <molecule id="P32743-1"/>
    <property type="nucleotide sequence ID" value="NM_066602.7"/>
</dbReference>
<dbReference type="RefSeq" id="NP_499004.1">
    <molecule id="P32743-2"/>
    <property type="nucleotide sequence ID" value="NM_066603.8"/>
</dbReference>
<dbReference type="BioGRID" id="41478">
    <property type="interactions" value="1"/>
</dbReference>
<dbReference type="DIP" id="DIP-26175N"/>
<dbReference type="FunCoup" id="P32743">
    <property type="interactions" value="389"/>
</dbReference>
<dbReference type="IntAct" id="P32743">
    <property type="interactions" value="1"/>
</dbReference>
<dbReference type="PaxDb" id="6239-R107.5b"/>
<dbReference type="PeptideAtlas" id="P32743"/>
<dbReference type="EnsemblMetazoa" id="R107.5a.1">
    <molecule id="P32743-2"/>
    <property type="protein sequence ID" value="R107.5a.1"/>
    <property type="gene ID" value="WBGene00011300"/>
</dbReference>
<dbReference type="EnsemblMetazoa" id="R107.5b.1">
    <molecule id="P32743-1"/>
    <property type="protein sequence ID" value="R107.5b.1"/>
    <property type="gene ID" value="WBGene00011300"/>
</dbReference>
<dbReference type="GeneID" id="176279"/>
<dbReference type="KEGG" id="cel:CELE_R107.5"/>
<dbReference type="UCSC" id="R107.5b.1">
    <molecule id="P32743-1"/>
    <property type="organism name" value="c. elegans"/>
</dbReference>
<dbReference type="AGR" id="WB:WBGene00011300"/>
<dbReference type="CTD" id="176279"/>
<dbReference type="WormBase" id="R107.5a">
    <molecule id="P32743-2"/>
    <property type="protein sequence ID" value="CE00300"/>
    <property type="gene ID" value="WBGene00011300"/>
</dbReference>
<dbReference type="WormBase" id="R107.5b">
    <molecule id="P32743-1"/>
    <property type="protein sequence ID" value="CE23918"/>
    <property type="gene ID" value="WBGene00011300"/>
</dbReference>
<dbReference type="eggNOG" id="ENOG502R27S">
    <property type="taxonomic scope" value="Eukaryota"/>
</dbReference>
<dbReference type="HOGENOM" id="CLU_1016460_0_0_1"/>
<dbReference type="InParanoid" id="P32743"/>
<dbReference type="OMA" id="MEYVPRT"/>
<dbReference type="OrthoDB" id="5840954at2759"/>
<dbReference type="PRO" id="PR:P32743"/>
<dbReference type="Proteomes" id="UP000001940">
    <property type="component" value="Chromosome III"/>
</dbReference>
<dbReference type="Bgee" id="WBGene00011300">
    <property type="expression patterns" value="Expressed in germ line (C elegans) and 4 other cell types or tissues"/>
</dbReference>
<feature type="chain" id="PRO_0000065439" description="Uncharacterized protein R107.5">
    <location>
        <begin position="1"/>
        <end position="274"/>
    </location>
</feature>
<feature type="region of interest" description="Disordered" evidence="1">
    <location>
        <begin position="1"/>
        <end position="38"/>
    </location>
</feature>
<feature type="region of interest" description="Disordered" evidence="1">
    <location>
        <begin position="222"/>
        <end position="274"/>
    </location>
</feature>
<feature type="compositionally biased region" description="Low complexity" evidence="1">
    <location>
        <begin position="1"/>
        <end position="17"/>
    </location>
</feature>
<feature type="compositionally biased region" description="Polar residues" evidence="1">
    <location>
        <begin position="18"/>
        <end position="28"/>
    </location>
</feature>
<feature type="compositionally biased region" description="Basic and acidic residues" evidence="1">
    <location>
        <begin position="29"/>
        <end position="38"/>
    </location>
</feature>
<feature type="compositionally biased region" description="Polar residues" evidence="1">
    <location>
        <begin position="239"/>
        <end position="249"/>
    </location>
</feature>
<feature type="compositionally biased region" description="Polar residues" evidence="1">
    <location>
        <begin position="256"/>
        <end position="265"/>
    </location>
</feature>
<feature type="splice variant" id="VSP_015949" description="In isoform a." evidence="2">
    <original>ICR</original>
    <variation>M</variation>
    <location>
        <begin position="86"/>
        <end position="88"/>
    </location>
</feature>
<proteinExistence type="predicted"/>
<sequence>MTQLTNFSESFSNQNSNLHQPYNFNSHQPPEENHYYVREPNGKRPFPVEFELDMEYVPRTKRRFDKISACLENFSISNDKPSPINICRESSSDEEMDEVYDDSNFDQCTESTSIPLVVEPDDEPAVAKKIRLDESIQRYFEKCRQGPIDFLPKPEKLKGNEMVIWQPRILVSPKNDFNMAGRIQEIDDEEEDRVNEEIKTRIIENEGMIDEDTRNETTGIVELGTGSDHSDIGSSWSSPMASPTGSSQIVELDPDSPNSLTNGSVTDEEMMEFE</sequence>
<evidence type="ECO:0000256" key="1">
    <source>
        <dbReference type="SAM" id="MobiDB-lite"/>
    </source>
</evidence>
<evidence type="ECO:0000305" key="2"/>
<organism>
    <name type="scientific">Caenorhabditis elegans</name>
    <dbReference type="NCBI Taxonomy" id="6239"/>
    <lineage>
        <taxon>Eukaryota</taxon>
        <taxon>Metazoa</taxon>
        <taxon>Ecdysozoa</taxon>
        <taxon>Nematoda</taxon>
        <taxon>Chromadorea</taxon>
        <taxon>Rhabditida</taxon>
        <taxon>Rhabditina</taxon>
        <taxon>Rhabditomorpha</taxon>
        <taxon>Rhabditoidea</taxon>
        <taxon>Rhabditidae</taxon>
        <taxon>Peloderinae</taxon>
        <taxon>Caenorhabditis</taxon>
    </lineage>
</organism>
<comment type="alternative products">
    <event type="alternative splicing"/>
    <isoform>
        <id>P32743-1</id>
        <name>b</name>
        <sequence type="displayed"/>
    </isoform>
    <isoform>
        <id>P32743-2</id>
        <name>a</name>
        <sequence type="described" ref="VSP_015949"/>
    </isoform>
</comment>